<gene>
    <name evidence="1" type="primary">rpsO</name>
    <name type="ordered locus">Arth_1433</name>
</gene>
<dbReference type="EMBL" id="CP000454">
    <property type="protein sequence ID" value="ABK02827.1"/>
    <property type="molecule type" value="Genomic_DNA"/>
</dbReference>
<dbReference type="RefSeq" id="WP_011691294.1">
    <property type="nucleotide sequence ID" value="NC_008541.1"/>
</dbReference>
<dbReference type="SMR" id="A0JUV7"/>
<dbReference type="STRING" id="290399.Arth_1433"/>
<dbReference type="KEGG" id="art:Arth_1433"/>
<dbReference type="eggNOG" id="COG0184">
    <property type="taxonomic scope" value="Bacteria"/>
</dbReference>
<dbReference type="HOGENOM" id="CLU_148518_0_0_11"/>
<dbReference type="OrthoDB" id="9799262at2"/>
<dbReference type="Proteomes" id="UP000000754">
    <property type="component" value="Chromosome"/>
</dbReference>
<dbReference type="GO" id="GO:0022627">
    <property type="term" value="C:cytosolic small ribosomal subunit"/>
    <property type="evidence" value="ECO:0007669"/>
    <property type="project" value="TreeGrafter"/>
</dbReference>
<dbReference type="GO" id="GO:0019843">
    <property type="term" value="F:rRNA binding"/>
    <property type="evidence" value="ECO:0007669"/>
    <property type="project" value="UniProtKB-UniRule"/>
</dbReference>
<dbReference type="GO" id="GO:0003735">
    <property type="term" value="F:structural constituent of ribosome"/>
    <property type="evidence" value="ECO:0007669"/>
    <property type="project" value="InterPro"/>
</dbReference>
<dbReference type="GO" id="GO:0006412">
    <property type="term" value="P:translation"/>
    <property type="evidence" value="ECO:0007669"/>
    <property type="project" value="UniProtKB-UniRule"/>
</dbReference>
<dbReference type="CDD" id="cd00353">
    <property type="entry name" value="Ribosomal_S15p_S13e"/>
    <property type="match status" value="1"/>
</dbReference>
<dbReference type="FunFam" id="1.10.287.10:FF:000002">
    <property type="entry name" value="30S ribosomal protein S15"/>
    <property type="match status" value="1"/>
</dbReference>
<dbReference type="Gene3D" id="6.10.250.3130">
    <property type="match status" value="1"/>
</dbReference>
<dbReference type="Gene3D" id="1.10.287.10">
    <property type="entry name" value="S15/NS1, RNA-binding"/>
    <property type="match status" value="1"/>
</dbReference>
<dbReference type="HAMAP" id="MF_01343_B">
    <property type="entry name" value="Ribosomal_uS15_B"/>
    <property type="match status" value="1"/>
</dbReference>
<dbReference type="InterPro" id="IPR000589">
    <property type="entry name" value="Ribosomal_uS15"/>
</dbReference>
<dbReference type="InterPro" id="IPR005290">
    <property type="entry name" value="Ribosomal_uS15_bac-type"/>
</dbReference>
<dbReference type="InterPro" id="IPR009068">
    <property type="entry name" value="uS15_NS1_RNA-bd_sf"/>
</dbReference>
<dbReference type="NCBIfam" id="TIGR00952">
    <property type="entry name" value="S15_bact"/>
    <property type="match status" value="1"/>
</dbReference>
<dbReference type="PANTHER" id="PTHR23321">
    <property type="entry name" value="RIBOSOMAL PROTEIN S15, BACTERIAL AND ORGANELLAR"/>
    <property type="match status" value="1"/>
</dbReference>
<dbReference type="PANTHER" id="PTHR23321:SF26">
    <property type="entry name" value="SMALL RIBOSOMAL SUBUNIT PROTEIN US15M"/>
    <property type="match status" value="1"/>
</dbReference>
<dbReference type="Pfam" id="PF00312">
    <property type="entry name" value="Ribosomal_S15"/>
    <property type="match status" value="1"/>
</dbReference>
<dbReference type="SMART" id="SM01387">
    <property type="entry name" value="Ribosomal_S15"/>
    <property type="match status" value="1"/>
</dbReference>
<dbReference type="SUPFAM" id="SSF47060">
    <property type="entry name" value="S15/NS1 RNA-binding domain"/>
    <property type="match status" value="1"/>
</dbReference>
<dbReference type="PROSITE" id="PS00362">
    <property type="entry name" value="RIBOSOMAL_S15"/>
    <property type="match status" value="1"/>
</dbReference>
<name>RS15_ARTS2</name>
<proteinExistence type="inferred from homology"/>
<comment type="function">
    <text evidence="1">One of the primary rRNA binding proteins, it binds directly to 16S rRNA where it helps nucleate assembly of the platform of the 30S subunit by binding and bridging several RNA helices of the 16S rRNA.</text>
</comment>
<comment type="function">
    <text evidence="1">Forms an intersubunit bridge (bridge B4) with the 23S rRNA of the 50S subunit in the ribosome.</text>
</comment>
<comment type="subunit">
    <text evidence="1">Part of the 30S ribosomal subunit. Forms a bridge to the 50S subunit in the 70S ribosome, contacting the 23S rRNA.</text>
</comment>
<comment type="similarity">
    <text evidence="1">Belongs to the universal ribosomal protein uS15 family.</text>
</comment>
<keyword id="KW-1185">Reference proteome</keyword>
<keyword id="KW-0687">Ribonucleoprotein</keyword>
<keyword id="KW-0689">Ribosomal protein</keyword>
<keyword id="KW-0694">RNA-binding</keyword>
<keyword id="KW-0699">rRNA-binding</keyword>
<sequence length="89" mass="10290">MALDAAVKQSIIKDFATSEGDTGSPEVQVAVLTQRIKDLTEHMKEHKHDFHTQRGLLAMVGRRKRMLTYLKNTDINRYRALIERLGLRR</sequence>
<protein>
    <recommendedName>
        <fullName evidence="1">Small ribosomal subunit protein uS15</fullName>
    </recommendedName>
    <alternativeName>
        <fullName evidence="2">30S ribosomal protein S15</fullName>
    </alternativeName>
</protein>
<reference key="1">
    <citation type="journal article" date="2013" name="Stand. Genomic Sci.">
        <title>Complete genome sequence of Arthrobacter sp. strain FB24.</title>
        <authorList>
            <person name="Nakatsu C.H."/>
            <person name="Barabote R."/>
            <person name="Thompson S."/>
            <person name="Bruce D."/>
            <person name="Detter C."/>
            <person name="Brettin T."/>
            <person name="Han C."/>
            <person name="Beasley F."/>
            <person name="Chen W."/>
            <person name="Konopka A."/>
            <person name="Xie G."/>
        </authorList>
    </citation>
    <scope>NUCLEOTIDE SEQUENCE [LARGE SCALE GENOMIC DNA]</scope>
    <source>
        <strain>FB24</strain>
    </source>
</reference>
<evidence type="ECO:0000255" key="1">
    <source>
        <dbReference type="HAMAP-Rule" id="MF_01343"/>
    </source>
</evidence>
<evidence type="ECO:0000305" key="2"/>
<feature type="chain" id="PRO_1000054747" description="Small ribosomal subunit protein uS15">
    <location>
        <begin position="1"/>
        <end position="89"/>
    </location>
</feature>
<organism>
    <name type="scientific">Arthrobacter sp. (strain FB24)</name>
    <dbReference type="NCBI Taxonomy" id="290399"/>
    <lineage>
        <taxon>Bacteria</taxon>
        <taxon>Bacillati</taxon>
        <taxon>Actinomycetota</taxon>
        <taxon>Actinomycetes</taxon>
        <taxon>Micrococcales</taxon>
        <taxon>Micrococcaceae</taxon>
        <taxon>Arthrobacter</taxon>
    </lineage>
</organism>
<accession>A0JUV7</accession>